<keyword id="KW-0001">2Fe-2S</keyword>
<keyword id="KW-0408">Iron</keyword>
<keyword id="KW-0411">Iron-sulfur</keyword>
<keyword id="KW-0479">Metal-binding</keyword>
<keyword id="KW-0560">Oxidoreductase</keyword>
<keyword id="KW-0614">Plasmid</keyword>
<protein>
    <recommendedName>
        <fullName evidence="5">N,N-dimethyl phenylurea N-demethylase subunit alpha</fullName>
        <ecNumber evidence="3">1.14.15.38</ecNumber>
    </recommendedName>
</protein>
<sequence length="459" mass="51815">MFRYDQVAHLTDQAYIDDLCDRVEQGLDQGLLPSHVFRDERVFKVEMDRIFTRAWVFVAHETEIPKSGDFVLRKVGLDQVIVTRSAGGAINVLLNHCRHRGTEVCHEDSGNTTHFKCPYHGWIYKNDGDFVGAPAMREAYGGRLDSKKNGLLRAPQVESYHGFIFTCLSESGPSLSEYLGDVSWMLDAIVKLHPAGLKVLGAPERFIIRTDWKIGAENFAGDVYHIATAHLSVNETKYISQDMRDTLKTGGGYRFQNGHGFITHRSSEMVGAEGGLWAYGLNPEIRKQFDLEGFDDAQKKMLLEAPPVAGNIFPNFSYLRGALPANAGDLPVVFTNFRLWQPVEPGVMEVWNWQFSYDALPDEYNREAYAAGQLAFSAAGLFDQDDSAVWEGVAKLGGSPWGRKEEVMLHYGQQRVEPDSTYEGKGDYFPSTFGEFNQENFWREWVKQLRSDVRNEVPA</sequence>
<proteinExistence type="evidence at protein level"/>
<reference key="1">
    <citation type="journal article" date="2013" name="Appl. Environ. Microbiol.">
        <title>The novel bacterial N-demethylase PdmAB is responsible for the initial step of N,N-dimethyl-substituted phenylurea herbicide degradation.</title>
        <authorList>
            <person name="Gu T."/>
            <person name="Zhou C."/>
            <person name="Soerensen S.R."/>
            <person name="Zhang J."/>
            <person name="He J."/>
            <person name="Yu P."/>
            <person name="Yan X."/>
            <person name="Li S."/>
        </authorList>
    </citation>
    <scope>NUCLEOTIDE SEQUENCE [GENOMIC DNA]</scope>
    <scope>FUNCTION</scope>
    <scope>CATALYTIC ACTIVITY</scope>
    <scope>ACTIVITY REGULATION</scope>
    <scope>SUBUNIT</scope>
    <scope>DISRUPTION PHENOTYPE</scope>
    <source>
        <strain>YBL2</strain>
    </source>
</reference>
<reference key="2">
    <citation type="submission" date="2015-02" db="EMBL/GenBank/DDBJ databases">
        <title>The analysis of one genome.</title>
        <authorList>
            <person name="Yan X."/>
        </authorList>
    </citation>
    <scope>NUCLEOTIDE SEQUENCE [LARGE SCALE GENOMIC DNA]</scope>
    <source>
        <strain>YBL2</strain>
        <plasmid>YBL2_4</plasmid>
    </source>
</reference>
<dbReference type="EC" id="1.14.15.38" evidence="3"/>
<dbReference type="EMBL" id="KC904972">
    <property type="protein sequence ID" value="AGS18337.1"/>
    <property type="molecule type" value="Genomic_DNA"/>
</dbReference>
<dbReference type="EMBL" id="CP010958">
    <property type="protein sequence ID" value="AJR27072.1"/>
    <property type="molecule type" value="Genomic_DNA"/>
</dbReference>
<dbReference type="RefSeq" id="WP_044663626.1">
    <property type="nucleotide sequence ID" value="NZ_CP010958.1"/>
</dbReference>
<dbReference type="SMR" id="S5RR11"/>
<dbReference type="KEGG" id="syb:TZ53_25065"/>
<dbReference type="PATRIC" id="fig|484429.4.peg.5270"/>
<dbReference type="HOGENOM" id="CLU_026244_4_0_5"/>
<dbReference type="BioCyc" id="MetaCyc:MONOMER-21166"/>
<dbReference type="BRENDA" id="1.14.15.38">
    <property type="organism ID" value="17530"/>
</dbReference>
<dbReference type="Proteomes" id="UP000032302">
    <property type="component" value="Plasmid YBL2_4"/>
</dbReference>
<dbReference type="GO" id="GO:0051537">
    <property type="term" value="F:2 iron, 2 sulfur cluster binding"/>
    <property type="evidence" value="ECO:0007669"/>
    <property type="project" value="UniProtKB-KW"/>
</dbReference>
<dbReference type="GO" id="GO:0005506">
    <property type="term" value="F:iron ion binding"/>
    <property type="evidence" value="ECO:0007669"/>
    <property type="project" value="InterPro"/>
</dbReference>
<dbReference type="GO" id="GO:0016491">
    <property type="term" value="F:oxidoreductase activity"/>
    <property type="evidence" value="ECO:0007669"/>
    <property type="project" value="UniProtKB-KW"/>
</dbReference>
<dbReference type="Gene3D" id="3.90.380.10">
    <property type="entry name" value="Naphthalene 1,2-dioxygenase Alpha Subunit, Chain A, domain 1"/>
    <property type="match status" value="1"/>
</dbReference>
<dbReference type="Gene3D" id="2.102.10.10">
    <property type="entry name" value="Rieske [2Fe-2S] iron-sulphur domain"/>
    <property type="match status" value="1"/>
</dbReference>
<dbReference type="InterPro" id="IPR017941">
    <property type="entry name" value="Rieske_2Fe-2S"/>
</dbReference>
<dbReference type="InterPro" id="IPR036922">
    <property type="entry name" value="Rieske_2Fe-2S_sf"/>
</dbReference>
<dbReference type="InterPro" id="IPR015881">
    <property type="entry name" value="Ring-hydroxy_dOase_2Fe2S_BS"/>
</dbReference>
<dbReference type="InterPro" id="IPR001663">
    <property type="entry name" value="Rng_hydr_dOase-A"/>
</dbReference>
<dbReference type="PANTHER" id="PTHR43756:SF1">
    <property type="entry name" value="3-PHENYLPROPIONATE_CINNAMIC ACID DIOXYGENASE SUBUNIT ALPHA"/>
    <property type="match status" value="1"/>
</dbReference>
<dbReference type="PANTHER" id="PTHR43756">
    <property type="entry name" value="CHOLINE MONOOXYGENASE, CHLOROPLASTIC"/>
    <property type="match status" value="1"/>
</dbReference>
<dbReference type="Pfam" id="PF00355">
    <property type="entry name" value="Rieske"/>
    <property type="match status" value="1"/>
</dbReference>
<dbReference type="PRINTS" id="PR00090">
    <property type="entry name" value="RNGDIOXGNASE"/>
</dbReference>
<dbReference type="SUPFAM" id="SSF55961">
    <property type="entry name" value="Bet v1-like"/>
    <property type="match status" value="1"/>
</dbReference>
<dbReference type="SUPFAM" id="SSF50022">
    <property type="entry name" value="ISP domain"/>
    <property type="match status" value="1"/>
</dbReference>
<dbReference type="PROSITE" id="PS51296">
    <property type="entry name" value="RIESKE"/>
    <property type="match status" value="1"/>
</dbReference>
<dbReference type="PROSITE" id="PS00570">
    <property type="entry name" value="RING_HYDROXYL_ALPHA"/>
    <property type="match status" value="1"/>
</dbReference>
<evidence type="ECO:0000250" key="1">
    <source>
        <dbReference type="UniProtKB" id="Q53122"/>
    </source>
</evidence>
<evidence type="ECO:0000255" key="2">
    <source>
        <dbReference type="PROSITE-ProRule" id="PRU00628"/>
    </source>
</evidence>
<evidence type="ECO:0000269" key="3">
    <source>
    </source>
</evidence>
<evidence type="ECO:0000303" key="4">
    <source>
    </source>
</evidence>
<evidence type="ECO:0000305" key="5"/>
<evidence type="ECO:0000305" key="6">
    <source>
    </source>
</evidence>
<evidence type="ECO:0000312" key="7">
    <source>
        <dbReference type="EMBL" id="AJR27072.1"/>
    </source>
</evidence>
<evidence type="ECO:0000312" key="8">
    <source>
        <dbReference type="Proteomes" id="UP000032302"/>
    </source>
</evidence>
<organism>
    <name type="scientific">Sphingobium sp. (strain YBL2)</name>
    <dbReference type="NCBI Taxonomy" id="484429"/>
    <lineage>
        <taxon>Bacteria</taxon>
        <taxon>Pseudomonadati</taxon>
        <taxon>Pseudomonadota</taxon>
        <taxon>Alphaproteobacteria</taxon>
        <taxon>Sphingomonadales</taxon>
        <taxon>Sphingomonadaceae</taxon>
        <taxon>Sphingobium</taxon>
    </lineage>
</organism>
<accession>S5RR11</accession>
<feature type="chain" id="PRO_0000459011" description="N,N-dimethyl phenylurea N-demethylase subunit alpha">
    <location>
        <begin position="1"/>
        <end position="459"/>
    </location>
</feature>
<feature type="domain" description="Rieske" evidence="2">
    <location>
        <begin position="55"/>
        <end position="166"/>
    </location>
</feature>
<feature type="binding site" evidence="2">
    <location>
        <position position="97"/>
    </location>
    <ligand>
        <name>[2Fe-2S] cluster</name>
        <dbReference type="ChEBI" id="CHEBI:190135"/>
    </ligand>
</feature>
<feature type="binding site" evidence="2">
    <location>
        <position position="99"/>
    </location>
    <ligand>
        <name>[2Fe-2S] cluster</name>
        <dbReference type="ChEBI" id="CHEBI:190135"/>
    </ligand>
</feature>
<feature type="binding site" evidence="2">
    <location>
        <position position="117"/>
    </location>
    <ligand>
        <name>[2Fe-2S] cluster</name>
        <dbReference type="ChEBI" id="CHEBI:190135"/>
    </ligand>
</feature>
<feature type="binding site" evidence="2">
    <location>
        <position position="120"/>
    </location>
    <ligand>
        <name>[2Fe-2S] cluster</name>
        <dbReference type="ChEBI" id="CHEBI:190135"/>
    </ligand>
</feature>
<feature type="binding site" evidence="1">
    <location>
        <position position="225"/>
    </location>
    <ligand>
        <name>Fe cation</name>
        <dbReference type="ChEBI" id="CHEBI:24875"/>
    </ligand>
</feature>
<feature type="binding site" evidence="1">
    <location>
        <position position="230"/>
    </location>
    <ligand>
        <name>Fe cation</name>
        <dbReference type="ChEBI" id="CHEBI:24875"/>
    </ligand>
</feature>
<feature type="binding site" evidence="1">
    <location>
        <position position="386"/>
    </location>
    <ligand>
        <name>Fe cation</name>
        <dbReference type="ChEBI" id="CHEBI:24875"/>
    </ligand>
</feature>
<name>PDMA_SPHYB</name>
<comment type="function">
    <text evidence="3">Part of the multicomponent N,N-dimethyl phenylurea N-demethylase responsible for the initial N-demethylation step during the bacterial metabolism of N,N-dimethyl-substituted phenylurea herbicides (PubMed:24123738). Catalyzes the mono-N-demethylation of N,N-dimethyl-substituted phenylurea herbicides to their mono-N-demethylated derivatives (PubMed:24123738). Is active on isoproturon (IPU), chlorotoluron, metoxuron, monoron, diuron, fluometuron and fenuron, but cannot transform the N-methoxy-N-methyl-substituted herbicides (PubMed:24123738).</text>
</comment>
<comment type="catalytic activity">
    <reaction evidence="3">
        <text>a 1,1-dimethyl-3-phenylurea + 2 reduced [2Fe-2S]-[ferredoxin] + O2 + 2 H(+) = a 1-methyl-3-phenylurea + formaldehyde + 2 oxidized [2Fe-2S]-[ferredoxin] + H2O</text>
        <dbReference type="Rhea" id="RHEA:65768"/>
        <dbReference type="Rhea" id="RHEA-COMP:10000"/>
        <dbReference type="Rhea" id="RHEA-COMP:10001"/>
        <dbReference type="ChEBI" id="CHEBI:15377"/>
        <dbReference type="ChEBI" id="CHEBI:15378"/>
        <dbReference type="ChEBI" id="CHEBI:15379"/>
        <dbReference type="ChEBI" id="CHEBI:16842"/>
        <dbReference type="ChEBI" id="CHEBI:33737"/>
        <dbReference type="ChEBI" id="CHEBI:33738"/>
        <dbReference type="ChEBI" id="CHEBI:157693"/>
        <dbReference type="ChEBI" id="CHEBI:157694"/>
        <dbReference type="EC" id="1.14.15.38"/>
    </reaction>
    <physiologicalReaction direction="left-to-right" evidence="3">
        <dbReference type="Rhea" id="RHEA:65769"/>
    </physiologicalReaction>
</comment>
<comment type="catalytic activity">
    <reaction evidence="3">
        <text>isoproturon + 2 reduced [2Fe-2S]-[ferredoxin] + O2 + 2 H(+) = 1-methyl-3-[4-(propan-2-yl)phenyl]urea + formaldehyde + 2 oxidized [2Fe-2S]-[ferredoxin] + H2O</text>
        <dbReference type="Rhea" id="RHEA:65772"/>
        <dbReference type="Rhea" id="RHEA-COMP:10000"/>
        <dbReference type="Rhea" id="RHEA-COMP:10001"/>
        <dbReference type="ChEBI" id="CHEBI:6049"/>
        <dbReference type="ChEBI" id="CHEBI:15377"/>
        <dbReference type="ChEBI" id="CHEBI:15378"/>
        <dbReference type="ChEBI" id="CHEBI:15379"/>
        <dbReference type="ChEBI" id="CHEBI:16842"/>
        <dbReference type="ChEBI" id="CHEBI:33737"/>
        <dbReference type="ChEBI" id="CHEBI:33738"/>
        <dbReference type="ChEBI" id="CHEBI:83468"/>
    </reaction>
    <physiologicalReaction direction="left-to-right" evidence="3">
        <dbReference type="Rhea" id="RHEA:65773"/>
    </physiologicalReaction>
</comment>
<comment type="catalytic activity">
    <reaction evidence="3">
        <text>chlorotoluron + 2 reduced [2Fe-2S]-[ferredoxin] + O2 + 2 H(+) = 3-(3-chloro-4-methylphenyl)-1-methylurea + formaldehyde + 2 oxidized [2Fe-2S]-[ferredoxin] + H2O</text>
        <dbReference type="Rhea" id="RHEA:65776"/>
        <dbReference type="Rhea" id="RHEA-COMP:10000"/>
        <dbReference type="Rhea" id="RHEA-COMP:10001"/>
        <dbReference type="ChEBI" id="CHEBI:15377"/>
        <dbReference type="ChEBI" id="CHEBI:15378"/>
        <dbReference type="ChEBI" id="CHEBI:15379"/>
        <dbReference type="ChEBI" id="CHEBI:16842"/>
        <dbReference type="ChEBI" id="CHEBI:33737"/>
        <dbReference type="ChEBI" id="CHEBI:33738"/>
        <dbReference type="ChEBI" id="CHEBI:81981"/>
        <dbReference type="ChEBI" id="CHEBI:157701"/>
    </reaction>
    <physiologicalReaction direction="left-to-right" evidence="3">
        <dbReference type="Rhea" id="RHEA:65777"/>
    </physiologicalReaction>
</comment>
<comment type="catalytic activity">
    <reaction evidence="3">
        <text>metoxuron + 2 reduced [2Fe-2S]-[ferredoxin] + O2 + 2 H(+) = 3-(3-chloro-4-methoxylphenyl)-1-methylurea + formaldehyde + 2 oxidized [2Fe-2S]-[ferredoxin] + H2O</text>
        <dbReference type="Rhea" id="RHEA:65780"/>
        <dbReference type="Rhea" id="RHEA-COMP:10000"/>
        <dbReference type="Rhea" id="RHEA-COMP:10001"/>
        <dbReference type="ChEBI" id="CHEBI:6907"/>
        <dbReference type="ChEBI" id="CHEBI:15377"/>
        <dbReference type="ChEBI" id="CHEBI:15378"/>
        <dbReference type="ChEBI" id="CHEBI:15379"/>
        <dbReference type="ChEBI" id="CHEBI:16842"/>
        <dbReference type="ChEBI" id="CHEBI:33737"/>
        <dbReference type="ChEBI" id="CHEBI:33738"/>
        <dbReference type="ChEBI" id="CHEBI:157702"/>
    </reaction>
    <physiologicalReaction direction="left-to-right" evidence="3">
        <dbReference type="Rhea" id="RHEA:65781"/>
    </physiologicalReaction>
</comment>
<comment type="catalytic activity">
    <reaction evidence="3">
        <text>monuron + 2 reduced [2Fe-2S]-[ferredoxin] + O2 + 2 H(+) = 3-(4-chlorophenyl)-1-methylurea + formaldehyde + 2 oxidized [2Fe-2S]-[ferredoxin] + H2O</text>
        <dbReference type="Rhea" id="RHEA:65784"/>
        <dbReference type="Rhea" id="RHEA-COMP:10000"/>
        <dbReference type="Rhea" id="RHEA-COMP:10001"/>
        <dbReference type="ChEBI" id="CHEBI:15377"/>
        <dbReference type="ChEBI" id="CHEBI:15378"/>
        <dbReference type="ChEBI" id="CHEBI:15379"/>
        <dbReference type="ChEBI" id="CHEBI:16842"/>
        <dbReference type="ChEBI" id="CHEBI:33737"/>
        <dbReference type="ChEBI" id="CHEBI:33738"/>
        <dbReference type="ChEBI" id="CHEBI:38214"/>
        <dbReference type="ChEBI" id="CHEBI:157703"/>
    </reaction>
    <physiologicalReaction direction="left-to-right" evidence="3">
        <dbReference type="Rhea" id="RHEA:65785"/>
    </physiologicalReaction>
</comment>
<comment type="catalytic activity">
    <reaction evidence="3">
        <text>diuron + 2 reduced [2Fe-2S]-[ferredoxin] + O2 + 2 H(+) = 3-(3,4-dichlorophenyl)-1-methylurea + formaldehyde + 2 oxidized [2Fe-2S]-[ferredoxin] + H2O</text>
        <dbReference type="Rhea" id="RHEA:65788"/>
        <dbReference type="Rhea" id="RHEA-COMP:10000"/>
        <dbReference type="Rhea" id="RHEA-COMP:10001"/>
        <dbReference type="ChEBI" id="CHEBI:15377"/>
        <dbReference type="ChEBI" id="CHEBI:15378"/>
        <dbReference type="ChEBI" id="CHEBI:15379"/>
        <dbReference type="ChEBI" id="CHEBI:16842"/>
        <dbReference type="ChEBI" id="CHEBI:33737"/>
        <dbReference type="ChEBI" id="CHEBI:33738"/>
        <dbReference type="ChEBI" id="CHEBI:83466"/>
        <dbReference type="ChEBI" id="CHEBI:116509"/>
    </reaction>
    <physiologicalReaction direction="left-to-right" evidence="3">
        <dbReference type="Rhea" id="RHEA:65789"/>
    </physiologicalReaction>
</comment>
<comment type="catalytic activity">
    <reaction evidence="3">
        <text>fluometuron + 2 reduced [2Fe-2S]-[ferredoxin] + O2 + 2 H(+) = 3-[3-(trifluoromethyl)phenyl]-1-methylurea + formaldehyde + 2 oxidized [2Fe-2S]-[ferredoxin] + H2O</text>
        <dbReference type="Rhea" id="RHEA:65792"/>
        <dbReference type="Rhea" id="RHEA-COMP:10000"/>
        <dbReference type="Rhea" id="RHEA-COMP:10001"/>
        <dbReference type="ChEBI" id="CHEBI:15377"/>
        <dbReference type="ChEBI" id="CHEBI:15378"/>
        <dbReference type="ChEBI" id="CHEBI:15379"/>
        <dbReference type="ChEBI" id="CHEBI:16842"/>
        <dbReference type="ChEBI" id="CHEBI:33737"/>
        <dbReference type="ChEBI" id="CHEBI:33738"/>
        <dbReference type="ChEBI" id="CHEBI:82012"/>
        <dbReference type="ChEBI" id="CHEBI:157704"/>
    </reaction>
    <physiologicalReaction direction="left-to-right" evidence="3">
        <dbReference type="Rhea" id="RHEA:65793"/>
    </physiologicalReaction>
</comment>
<comment type="catalytic activity">
    <reaction evidence="3">
        <text>fenuron + 2 reduced [2Fe-2S]-[ferredoxin] + O2 + 2 H(+) = 1-methyl-3-phenylurea + formaldehyde + 2 oxidized [2Fe-2S]-[ferredoxin] + H2O</text>
        <dbReference type="Rhea" id="RHEA:65796"/>
        <dbReference type="Rhea" id="RHEA-COMP:10000"/>
        <dbReference type="Rhea" id="RHEA-COMP:10001"/>
        <dbReference type="ChEBI" id="CHEBI:5013"/>
        <dbReference type="ChEBI" id="CHEBI:15377"/>
        <dbReference type="ChEBI" id="CHEBI:15378"/>
        <dbReference type="ChEBI" id="CHEBI:15379"/>
        <dbReference type="ChEBI" id="CHEBI:16842"/>
        <dbReference type="ChEBI" id="CHEBI:33737"/>
        <dbReference type="ChEBI" id="CHEBI:33738"/>
        <dbReference type="ChEBI" id="CHEBI:157705"/>
    </reaction>
    <physiologicalReaction direction="left-to-right" evidence="3">
        <dbReference type="Rhea" id="RHEA:65797"/>
    </physiologicalReaction>
</comment>
<comment type="cofactor">
    <cofactor evidence="2">
        <name>[2Fe-2S] cluster</name>
        <dbReference type="ChEBI" id="CHEBI:190135"/>
    </cofactor>
    <text evidence="2">Binds 1 [2Fe-2S] cluster per subunit.</text>
</comment>
<comment type="cofactor">
    <cofactor evidence="1">
        <name>Fe cation</name>
        <dbReference type="ChEBI" id="CHEBI:24875"/>
    </cofactor>
    <text evidence="1">Binds 1 Fe cation per subunit.</text>
</comment>
<comment type="activity regulation">
    <text evidence="3">Activity is stimulated in vitro by coexpression of a [3Fe-4S]-type ferredoxin.</text>
</comment>
<comment type="pathway">
    <text evidence="6">Xenobiotic degradation.</text>
</comment>
<comment type="subunit">
    <text evidence="3">PdmA (subunit alpha) and PdmB (subunit beta) form the oxygenase component of a bacterial Rieske non-heme iron oxygenase (RO) system.</text>
</comment>
<comment type="disruption phenotype">
    <text evidence="3">Disruption mutant cannot degrade isoproturon and other N,N-dimethyl-substituted phenylurea herbicides.</text>
</comment>
<comment type="similarity">
    <text evidence="5">Belongs to the bacterial ring-hydroxylating dioxygenase alpha subunit family.</text>
</comment>
<gene>
    <name evidence="4" type="primary">pdmA</name>
    <name evidence="7" type="ORF">TZ53_25065</name>
</gene>
<geneLocation type="plasmid" evidence="8">
    <name>YBL2_4</name>
</geneLocation>